<organism>
    <name type="scientific">Methanocorpusculum labreanum (strain ATCC 43576 / DSM 4855 / Z)</name>
    <dbReference type="NCBI Taxonomy" id="410358"/>
    <lineage>
        <taxon>Archaea</taxon>
        <taxon>Methanobacteriati</taxon>
        <taxon>Methanobacteriota</taxon>
        <taxon>Stenosarchaea group</taxon>
        <taxon>Methanomicrobia</taxon>
        <taxon>Methanomicrobiales</taxon>
        <taxon>Methanocorpusculaceae</taxon>
        <taxon>Methanocorpusculum</taxon>
    </lineage>
</organism>
<keyword id="KW-1185">Reference proteome</keyword>
<keyword id="KW-0678">Repressor</keyword>
<keyword id="KW-0687">Ribonucleoprotein</keyword>
<keyword id="KW-0689">Ribosomal protein</keyword>
<keyword id="KW-0694">RNA-binding</keyword>
<keyword id="KW-0699">rRNA-binding</keyword>
<keyword id="KW-0810">Translation regulation</keyword>
<keyword id="KW-0820">tRNA-binding</keyword>
<gene>
    <name evidence="1" type="primary">rpl1</name>
    <name type="ordered locus">Mlab_1581</name>
</gene>
<reference key="1">
    <citation type="journal article" date="2009" name="Stand. Genomic Sci.">
        <title>Complete genome sequence of Methanocorpusculum labreanum type strain Z.</title>
        <authorList>
            <person name="Anderson I.J."/>
            <person name="Sieprawska-Lupa M."/>
            <person name="Goltsman E."/>
            <person name="Lapidus A."/>
            <person name="Copeland A."/>
            <person name="Glavina Del Rio T."/>
            <person name="Tice H."/>
            <person name="Dalin E."/>
            <person name="Barry K."/>
            <person name="Pitluck S."/>
            <person name="Hauser L."/>
            <person name="Land M."/>
            <person name="Lucas S."/>
            <person name="Richardson P."/>
            <person name="Whitman W.B."/>
            <person name="Kyrpides N.C."/>
        </authorList>
    </citation>
    <scope>NUCLEOTIDE SEQUENCE [LARGE SCALE GENOMIC DNA]</scope>
    <source>
        <strain>ATCC 43576 / DSM 4855 / Z</strain>
    </source>
</reference>
<sequence>MVERTQIINAVTAAITQAPERKFQESIDITINLKHVDMAQPKNRIDETILLPQAIGVKKIAVLGKGDIVSQARNAGVDLIIGPDEIERLGGVPREARKMAGQYDFFLAETAVMPLVGRWLGQRLGPRGKMPQPIPPTQDITPIVERLRNSVKIRSKDRLNMSVKVGNTGMTVEEVSENIDAVVKRVVGRLESGELNIRSVYVKTTMGPAVKVM</sequence>
<name>RL1_METLZ</name>
<dbReference type="EMBL" id="CP000559">
    <property type="protein sequence ID" value="ABN07745.1"/>
    <property type="molecule type" value="Genomic_DNA"/>
</dbReference>
<dbReference type="RefSeq" id="WP_011833948.1">
    <property type="nucleotide sequence ID" value="NC_008942.1"/>
</dbReference>
<dbReference type="SMR" id="A2STT9"/>
<dbReference type="STRING" id="410358.Mlab_1581"/>
<dbReference type="GeneID" id="4795949"/>
<dbReference type="KEGG" id="mla:Mlab_1581"/>
<dbReference type="eggNOG" id="arCOG04289">
    <property type="taxonomic scope" value="Archaea"/>
</dbReference>
<dbReference type="HOGENOM" id="CLU_062853_4_0_2"/>
<dbReference type="OrthoDB" id="10382at2157"/>
<dbReference type="Proteomes" id="UP000000365">
    <property type="component" value="Chromosome"/>
</dbReference>
<dbReference type="GO" id="GO:0015934">
    <property type="term" value="C:large ribosomal subunit"/>
    <property type="evidence" value="ECO:0007669"/>
    <property type="project" value="InterPro"/>
</dbReference>
<dbReference type="GO" id="GO:0019843">
    <property type="term" value="F:rRNA binding"/>
    <property type="evidence" value="ECO:0007669"/>
    <property type="project" value="UniProtKB-UniRule"/>
</dbReference>
<dbReference type="GO" id="GO:0003735">
    <property type="term" value="F:structural constituent of ribosome"/>
    <property type="evidence" value="ECO:0007669"/>
    <property type="project" value="InterPro"/>
</dbReference>
<dbReference type="GO" id="GO:0000049">
    <property type="term" value="F:tRNA binding"/>
    <property type="evidence" value="ECO:0007669"/>
    <property type="project" value="UniProtKB-KW"/>
</dbReference>
<dbReference type="GO" id="GO:0006417">
    <property type="term" value="P:regulation of translation"/>
    <property type="evidence" value="ECO:0007669"/>
    <property type="project" value="UniProtKB-KW"/>
</dbReference>
<dbReference type="GO" id="GO:0006412">
    <property type="term" value="P:translation"/>
    <property type="evidence" value="ECO:0007669"/>
    <property type="project" value="UniProtKB-UniRule"/>
</dbReference>
<dbReference type="CDD" id="cd00403">
    <property type="entry name" value="Ribosomal_L1"/>
    <property type="match status" value="1"/>
</dbReference>
<dbReference type="FunFam" id="3.40.50.790:FF:000005">
    <property type="entry name" value="50S ribosomal protein L1"/>
    <property type="match status" value="1"/>
</dbReference>
<dbReference type="Gene3D" id="3.30.190.20">
    <property type="match status" value="1"/>
</dbReference>
<dbReference type="Gene3D" id="3.40.50.790">
    <property type="match status" value="1"/>
</dbReference>
<dbReference type="HAMAP" id="MF_01318_A">
    <property type="entry name" value="Ribosomal_uL1_A"/>
    <property type="match status" value="1"/>
</dbReference>
<dbReference type="InterPro" id="IPR002143">
    <property type="entry name" value="Ribosomal_uL1"/>
</dbReference>
<dbReference type="InterPro" id="IPR023674">
    <property type="entry name" value="Ribosomal_uL1-like"/>
</dbReference>
<dbReference type="InterPro" id="IPR028364">
    <property type="entry name" value="Ribosomal_uL1/biogenesis"/>
</dbReference>
<dbReference type="InterPro" id="IPR016095">
    <property type="entry name" value="Ribosomal_uL1_3-a/b-sand"/>
</dbReference>
<dbReference type="InterPro" id="IPR023669">
    <property type="entry name" value="Ribosomal_uL1_arc"/>
</dbReference>
<dbReference type="InterPro" id="IPR023673">
    <property type="entry name" value="Ribosomal_uL1_CS"/>
</dbReference>
<dbReference type="NCBIfam" id="NF003244">
    <property type="entry name" value="PRK04203.1"/>
    <property type="match status" value="1"/>
</dbReference>
<dbReference type="PANTHER" id="PTHR36427">
    <property type="entry name" value="54S RIBOSOMAL PROTEIN L1, MITOCHONDRIAL"/>
    <property type="match status" value="1"/>
</dbReference>
<dbReference type="PANTHER" id="PTHR36427:SF3">
    <property type="entry name" value="LARGE RIBOSOMAL SUBUNIT PROTEIN UL1M"/>
    <property type="match status" value="1"/>
</dbReference>
<dbReference type="Pfam" id="PF00687">
    <property type="entry name" value="Ribosomal_L1"/>
    <property type="match status" value="1"/>
</dbReference>
<dbReference type="PIRSF" id="PIRSF002155">
    <property type="entry name" value="Ribosomal_L1"/>
    <property type="match status" value="1"/>
</dbReference>
<dbReference type="SUPFAM" id="SSF56808">
    <property type="entry name" value="Ribosomal protein L1"/>
    <property type="match status" value="1"/>
</dbReference>
<dbReference type="PROSITE" id="PS01199">
    <property type="entry name" value="RIBOSOMAL_L1"/>
    <property type="match status" value="1"/>
</dbReference>
<evidence type="ECO:0000255" key="1">
    <source>
        <dbReference type="HAMAP-Rule" id="MF_01318"/>
    </source>
</evidence>
<evidence type="ECO:0000305" key="2"/>
<proteinExistence type="inferred from homology"/>
<protein>
    <recommendedName>
        <fullName evidence="1">Large ribosomal subunit protein uL1</fullName>
    </recommendedName>
    <alternativeName>
        <fullName evidence="2">50S ribosomal protein L1</fullName>
    </alternativeName>
</protein>
<accession>A2STT9</accession>
<feature type="chain" id="PRO_0000308146" description="Large ribosomal subunit protein uL1">
    <location>
        <begin position="1"/>
        <end position="213"/>
    </location>
</feature>
<comment type="function">
    <text evidence="1">Binds directly to 23S rRNA. Probably involved in E site tRNA release.</text>
</comment>
<comment type="function">
    <text evidence="1">Protein L1 is also a translational repressor protein, it controls the translation of its operon by binding to its mRNA.</text>
</comment>
<comment type="subunit">
    <text evidence="1">Part of the 50S ribosomal subunit.</text>
</comment>
<comment type="similarity">
    <text evidence="1">Belongs to the universal ribosomal protein uL1 family.</text>
</comment>